<gene>
    <name evidence="1" type="primary">iscA</name>
    <name type="ordered locus">ESA_00724</name>
</gene>
<keyword id="KW-0408">Iron</keyword>
<keyword id="KW-0479">Metal-binding</keyword>
<keyword id="KW-1185">Reference proteome</keyword>
<comment type="function">
    <text evidence="1">Is able to transfer iron-sulfur clusters to apo-ferredoxin. Multiple cycles of [2Fe2S] cluster formation and transfer are observed, suggesting that IscA acts catalytically. Recruits intracellular free iron so as to provide iron for the assembly of transient iron-sulfur cluster in IscU in the presence of IscS, L-cysteine and the thioredoxin reductase system TrxA/TrxB.</text>
</comment>
<comment type="cofactor">
    <cofactor evidence="1">
        <name>Fe cation</name>
        <dbReference type="ChEBI" id="CHEBI:24875"/>
    </cofactor>
    <text evidence="1">Binds 2 iron ions per dimer. The dimer may bind additional iron ions.</text>
</comment>
<comment type="subunit">
    <text evidence="1">Homodimer; may form tetramers and higher multimers.</text>
</comment>
<comment type="similarity">
    <text evidence="1">Belongs to the HesB/IscA family.</text>
</comment>
<accession>A7MGY0</accession>
<feature type="chain" id="PRO_1000024374" description="Iron-binding protein IscA">
    <location>
        <begin position="1"/>
        <end position="107"/>
    </location>
</feature>
<feature type="binding site" evidence="1">
    <location>
        <position position="35"/>
    </location>
    <ligand>
        <name>Fe cation</name>
        <dbReference type="ChEBI" id="CHEBI:24875"/>
    </ligand>
</feature>
<feature type="binding site" evidence="1">
    <location>
        <position position="99"/>
    </location>
    <ligand>
        <name>Fe cation</name>
        <dbReference type="ChEBI" id="CHEBI:24875"/>
    </ligand>
</feature>
<feature type="binding site" evidence="1">
    <location>
        <position position="101"/>
    </location>
    <ligand>
        <name>Fe cation</name>
        <dbReference type="ChEBI" id="CHEBI:24875"/>
    </ligand>
</feature>
<name>ISCA_CROS8</name>
<dbReference type="EMBL" id="CP000783">
    <property type="protein sequence ID" value="ABU76001.1"/>
    <property type="molecule type" value="Genomic_DNA"/>
</dbReference>
<dbReference type="RefSeq" id="WP_004385926.1">
    <property type="nucleotide sequence ID" value="NC_009778.1"/>
</dbReference>
<dbReference type="SMR" id="A7MGY0"/>
<dbReference type="GeneID" id="56729611"/>
<dbReference type="KEGG" id="esa:ESA_00724"/>
<dbReference type="HOGENOM" id="CLU_069054_5_1_6"/>
<dbReference type="Proteomes" id="UP000000260">
    <property type="component" value="Chromosome"/>
</dbReference>
<dbReference type="GO" id="GO:0005829">
    <property type="term" value="C:cytosol"/>
    <property type="evidence" value="ECO:0007669"/>
    <property type="project" value="TreeGrafter"/>
</dbReference>
<dbReference type="GO" id="GO:0051537">
    <property type="term" value="F:2 iron, 2 sulfur cluster binding"/>
    <property type="evidence" value="ECO:0007669"/>
    <property type="project" value="TreeGrafter"/>
</dbReference>
<dbReference type="GO" id="GO:0005506">
    <property type="term" value="F:iron ion binding"/>
    <property type="evidence" value="ECO:0007669"/>
    <property type="project" value="UniProtKB-UniRule"/>
</dbReference>
<dbReference type="GO" id="GO:0016226">
    <property type="term" value="P:iron-sulfur cluster assembly"/>
    <property type="evidence" value="ECO:0007669"/>
    <property type="project" value="UniProtKB-UniRule"/>
</dbReference>
<dbReference type="FunFam" id="2.60.300.12:FF:000001">
    <property type="entry name" value="Iron-binding protein IscA"/>
    <property type="match status" value="1"/>
</dbReference>
<dbReference type="Gene3D" id="2.60.300.12">
    <property type="entry name" value="HesB-like domain"/>
    <property type="match status" value="1"/>
</dbReference>
<dbReference type="HAMAP" id="MF_01429">
    <property type="entry name" value="Fe_S_insert_IscA"/>
    <property type="match status" value="1"/>
</dbReference>
<dbReference type="InterPro" id="IPR050322">
    <property type="entry name" value="Fe-S_cluster_asmbl/transfer"/>
</dbReference>
<dbReference type="InterPro" id="IPR000361">
    <property type="entry name" value="FeS_biogenesis"/>
</dbReference>
<dbReference type="InterPro" id="IPR016092">
    <property type="entry name" value="FeS_cluster_insertion"/>
</dbReference>
<dbReference type="InterPro" id="IPR017870">
    <property type="entry name" value="FeS_cluster_insertion_CS"/>
</dbReference>
<dbReference type="InterPro" id="IPR035903">
    <property type="entry name" value="HesB-like_dom_sf"/>
</dbReference>
<dbReference type="InterPro" id="IPR011302">
    <property type="entry name" value="IscA_proteobacteria"/>
</dbReference>
<dbReference type="NCBIfam" id="TIGR00049">
    <property type="entry name" value="iron-sulfur cluster assembly accessory protein"/>
    <property type="match status" value="1"/>
</dbReference>
<dbReference type="NCBIfam" id="TIGR02011">
    <property type="entry name" value="IscA"/>
    <property type="match status" value="1"/>
</dbReference>
<dbReference type="NCBIfam" id="NF007049">
    <property type="entry name" value="PRK09502.1"/>
    <property type="match status" value="1"/>
</dbReference>
<dbReference type="PANTHER" id="PTHR10072:SF41">
    <property type="entry name" value="IRON-SULFUR CLUSTER ASSEMBLY 1 HOMOLOG, MITOCHONDRIAL"/>
    <property type="match status" value="1"/>
</dbReference>
<dbReference type="PANTHER" id="PTHR10072">
    <property type="entry name" value="IRON-SULFUR CLUSTER ASSEMBLY PROTEIN"/>
    <property type="match status" value="1"/>
</dbReference>
<dbReference type="Pfam" id="PF01521">
    <property type="entry name" value="Fe-S_biosyn"/>
    <property type="match status" value="1"/>
</dbReference>
<dbReference type="SUPFAM" id="SSF89360">
    <property type="entry name" value="HesB-like domain"/>
    <property type="match status" value="1"/>
</dbReference>
<dbReference type="PROSITE" id="PS01152">
    <property type="entry name" value="HESB"/>
    <property type="match status" value="1"/>
</dbReference>
<organism>
    <name type="scientific">Cronobacter sakazakii (strain ATCC BAA-894)</name>
    <name type="common">Enterobacter sakazakii</name>
    <dbReference type="NCBI Taxonomy" id="290339"/>
    <lineage>
        <taxon>Bacteria</taxon>
        <taxon>Pseudomonadati</taxon>
        <taxon>Pseudomonadota</taxon>
        <taxon>Gammaproteobacteria</taxon>
        <taxon>Enterobacterales</taxon>
        <taxon>Enterobacteriaceae</taxon>
        <taxon>Cronobacter</taxon>
    </lineage>
</organism>
<protein>
    <recommendedName>
        <fullName evidence="1">Iron-binding protein IscA</fullName>
    </recommendedName>
    <alternativeName>
        <fullName evidence="1">Iron-sulfur cluster assembly protein</fullName>
    </alternativeName>
</protein>
<sequence>MSITLSDTAAARVNAFLANRGKGFGLRLGVRTSGCSGMAYVLEFVDAPQPEDTVFEDKGVKVVVDGKSLQFLNGTQLDFVKEGLNEGFKFTNPNVKDECGCGESFNV</sequence>
<reference key="1">
    <citation type="journal article" date="2010" name="PLoS ONE">
        <title>Genome sequence of Cronobacter sakazakii BAA-894 and comparative genomic hybridization analysis with other Cronobacter species.</title>
        <authorList>
            <person name="Kucerova E."/>
            <person name="Clifton S.W."/>
            <person name="Xia X.Q."/>
            <person name="Long F."/>
            <person name="Porwollik S."/>
            <person name="Fulton L."/>
            <person name="Fronick C."/>
            <person name="Minx P."/>
            <person name="Kyung K."/>
            <person name="Warren W."/>
            <person name="Fulton R."/>
            <person name="Feng D."/>
            <person name="Wollam A."/>
            <person name="Shah N."/>
            <person name="Bhonagiri V."/>
            <person name="Nash W.E."/>
            <person name="Hallsworth-Pepin K."/>
            <person name="Wilson R.K."/>
            <person name="McClelland M."/>
            <person name="Forsythe S.J."/>
        </authorList>
    </citation>
    <scope>NUCLEOTIDE SEQUENCE [LARGE SCALE GENOMIC DNA]</scope>
    <source>
        <strain>ATCC BAA-894</strain>
    </source>
</reference>
<evidence type="ECO:0000255" key="1">
    <source>
        <dbReference type="HAMAP-Rule" id="MF_01429"/>
    </source>
</evidence>
<proteinExistence type="inferred from homology"/>